<proteinExistence type="inferred from homology"/>
<dbReference type="EC" id="2.5.1.141" evidence="1"/>
<dbReference type="EMBL" id="CP001598">
    <property type="protein sequence ID" value="ACQ47218.1"/>
    <property type="molecule type" value="Genomic_DNA"/>
</dbReference>
<dbReference type="RefSeq" id="WP_001015052.1">
    <property type="nucleotide sequence ID" value="NC_012659.1"/>
</dbReference>
<dbReference type="SMR" id="C3P6V2"/>
<dbReference type="GeneID" id="45023832"/>
<dbReference type="KEGG" id="bai:BAA_4180"/>
<dbReference type="HOGENOM" id="CLU_029631_0_0_9"/>
<dbReference type="UniPathway" id="UPA00834">
    <property type="reaction ID" value="UER00712"/>
</dbReference>
<dbReference type="GO" id="GO:0005886">
    <property type="term" value="C:plasma membrane"/>
    <property type="evidence" value="ECO:0007669"/>
    <property type="project" value="UniProtKB-SubCell"/>
</dbReference>
<dbReference type="GO" id="GO:0008495">
    <property type="term" value="F:protoheme IX farnesyltransferase activity"/>
    <property type="evidence" value="ECO:0007669"/>
    <property type="project" value="UniProtKB-UniRule"/>
</dbReference>
<dbReference type="GO" id="GO:0048034">
    <property type="term" value="P:heme O biosynthetic process"/>
    <property type="evidence" value="ECO:0007669"/>
    <property type="project" value="UniProtKB-UniRule"/>
</dbReference>
<dbReference type="CDD" id="cd13957">
    <property type="entry name" value="PT_UbiA_Cox10"/>
    <property type="match status" value="1"/>
</dbReference>
<dbReference type="FunFam" id="1.10.357.140:FF:000001">
    <property type="entry name" value="Protoheme IX farnesyltransferase"/>
    <property type="match status" value="1"/>
</dbReference>
<dbReference type="Gene3D" id="1.10.357.140">
    <property type="entry name" value="UbiA prenyltransferase"/>
    <property type="match status" value="1"/>
</dbReference>
<dbReference type="HAMAP" id="MF_00154">
    <property type="entry name" value="CyoE_CtaB"/>
    <property type="match status" value="1"/>
</dbReference>
<dbReference type="InterPro" id="IPR006369">
    <property type="entry name" value="Protohaem_IX_farnesylTrfase"/>
</dbReference>
<dbReference type="InterPro" id="IPR000537">
    <property type="entry name" value="UbiA_prenyltransferase"/>
</dbReference>
<dbReference type="InterPro" id="IPR030470">
    <property type="entry name" value="UbiA_prenylTrfase_CS"/>
</dbReference>
<dbReference type="InterPro" id="IPR044878">
    <property type="entry name" value="UbiA_sf"/>
</dbReference>
<dbReference type="NCBIfam" id="TIGR01473">
    <property type="entry name" value="cyoE_ctaB"/>
    <property type="match status" value="1"/>
</dbReference>
<dbReference type="PANTHER" id="PTHR43448">
    <property type="entry name" value="PROTOHEME IX FARNESYLTRANSFERASE, MITOCHONDRIAL"/>
    <property type="match status" value="1"/>
</dbReference>
<dbReference type="PANTHER" id="PTHR43448:SF2">
    <property type="entry name" value="PROTOHEME IX FARNESYLTRANSFERASE, MITOCHONDRIAL"/>
    <property type="match status" value="1"/>
</dbReference>
<dbReference type="Pfam" id="PF01040">
    <property type="entry name" value="UbiA"/>
    <property type="match status" value="1"/>
</dbReference>
<dbReference type="PROSITE" id="PS00943">
    <property type="entry name" value="UBIA"/>
    <property type="match status" value="1"/>
</dbReference>
<comment type="function">
    <text evidence="1">Converts heme B (protoheme IX) to heme O by substitution of the vinyl group on carbon 2 of heme B porphyrin ring with a hydroxyethyl farnesyl side group.</text>
</comment>
<comment type="catalytic activity">
    <reaction evidence="1">
        <text>heme b + (2E,6E)-farnesyl diphosphate + H2O = Fe(II)-heme o + diphosphate</text>
        <dbReference type="Rhea" id="RHEA:28070"/>
        <dbReference type="ChEBI" id="CHEBI:15377"/>
        <dbReference type="ChEBI" id="CHEBI:33019"/>
        <dbReference type="ChEBI" id="CHEBI:60344"/>
        <dbReference type="ChEBI" id="CHEBI:60530"/>
        <dbReference type="ChEBI" id="CHEBI:175763"/>
        <dbReference type="EC" id="2.5.1.141"/>
    </reaction>
</comment>
<comment type="pathway">
    <text evidence="1">Porphyrin-containing compound metabolism; heme O biosynthesis; heme O from protoheme: step 1/1.</text>
</comment>
<comment type="subunit">
    <text evidence="1">Interacts with CtaA.</text>
</comment>
<comment type="subcellular location">
    <subcellularLocation>
        <location evidence="1">Cell membrane</location>
        <topology evidence="1">Multi-pass membrane protein</topology>
    </subcellularLocation>
</comment>
<comment type="miscellaneous">
    <text evidence="1">Carbon 2 of the heme B porphyrin ring is defined according to the Fischer nomenclature.</text>
</comment>
<comment type="similarity">
    <text evidence="1">Belongs to the UbiA prenyltransferase family. Protoheme IX farnesyltransferase subfamily.</text>
</comment>
<reference key="1">
    <citation type="submission" date="2009-04" db="EMBL/GenBank/DDBJ databases">
        <title>Genome sequence of Bacillus anthracis A0248.</title>
        <authorList>
            <person name="Dodson R.J."/>
            <person name="Munk A.C."/>
            <person name="Bruce D."/>
            <person name="Detter C."/>
            <person name="Tapia R."/>
            <person name="Sutton G."/>
            <person name="Sims D."/>
            <person name="Brettin T."/>
        </authorList>
    </citation>
    <scope>NUCLEOTIDE SEQUENCE [LARGE SCALE GENOMIC DNA]</scope>
    <source>
        <strain>A0248</strain>
    </source>
</reference>
<gene>
    <name evidence="1" type="primary">ctaB</name>
    <name type="ordered locus">BAA_4180</name>
</gene>
<organism>
    <name type="scientific">Bacillus anthracis (strain A0248)</name>
    <dbReference type="NCBI Taxonomy" id="592021"/>
    <lineage>
        <taxon>Bacteria</taxon>
        <taxon>Bacillati</taxon>
        <taxon>Bacillota</taxon>
        <taxon>Bacilli</taxon>
        <taxon>Bacillales</taxon>
        <taxon>Bacillaceae</taxon>
        <taxon>Bacillus</taxon>
        <taxon>Bacillus cereus group</taxon>
    </lineage>
</organism>
<evidence type="ECO:0000255" key="1">
    <source>
        <dbReference type="HAMAP-Rule" id="MF_00154"/>
    </source>
</evidence>
<accession>C3P6V2</accession>
<protein>
    <recommendedName>
        <fullName evidence="1">Protoheme IX farnesyltransferase</fullName>
        <ecNumber evidence="1">2.5.1.141</ecNumber>
    </recommendedName>
    <alternativeName>
        <fullName evidence="1">Heme B farnesyltransferase</fullName>
    </alternativeName>
    <alternativeName>
        <fullName evidence="1">Heme O synthase</fullName>
    </alternativeName>
</protein>
<feature type="chain" id="PRO_1000199637" description="Protoheme IX farnesyltransferase">
    <location>
        <begin position="1"/>
        <end position="307"/>
    </location>
</feature>
<feature type="transmembrane region" description="Helical" evidence="1">
    <location>
        <begin position="32"/>
        <end position="52"/>
    </location>
</feature>
<feature type="transmembrane region" description="Helical" evidence="1">
    <location>
        <begin position="65"/>
        <end position="85"/>
    </location>
</feature>
<feature type="transmembrane region" description="Helical" evidence="1">
    <location>
        <begin position="108"/>
        <end position="128"/>
    </location>
</feature>
<feature type="transmembrane region" description="Helical" evidence="1">
    <location>
        <begin position="131"/>
        <end position="151"/>
    </location>
</feature>
<feature type="transmembrane region" description="Helical" evidence="1">
    <location>
        <begin position="158"/>
        <end position="178"/>
    </location>
</feature>
<feature type="transmembrane region" description="Helical" evidence="1">
    <location>
        <begin position="186"/>
        <end position="206"/>
    </location>
</feature>
<feature type="transmembrane region" description="Helical" evidence="1">
    <location>
        <begin position="251"/>
        <end position="271"/>
    </location>
</feature>
<feature type="transmembrane region" description="Helical" evidence="1">
    <location>
        <begin position="287"/>
        <end position="307"/>
    </location>
</feature>
<name>COXX_BACAA</name>
<sequence length="307" mass="34549">MNHATSELHDESAVTSIPETTRLQDLKALVKMGIVNSNTLTVFTGFWLALHFNGLSVMDNLDKLFFTIVGSGLVMAGVCCLNNYIDRDIDPLMERTKTRPTVTGKYKPGFALTFGLVILLLGFVFLLLTTPMAVLMGFIGAFTYVVLYSLWTKRKYTLNTVVGSISGAVPPLIGWAAIDPSLGHPIAWMLFLIMFIWQIPHFLALAMKRVDEYRNAGIPMLPVVHGFEITKRQIMIWTVCLLPLPFYMSGLGITFMVIATLLNIGWIVLGFYGFRKKDDIKWSVQMFVYSLNYLTILFVSMIVVTFF</sequence>
<keyword id="KW-1003">Cell membrane</keyword>
<keyword id="KW-0350">Heme biosynthesis</keyword>
<keyword id="KW-0472">Membrane</keyword>
<keyword id="KW-0808">Transferase</keyword>
<keyword id="KW-0812">Transmembrane</keyword>
<keyword id="KW-1133">Transmembrane helix</keyword>